<protein>
    <recommendedName>
        <fullName evidence="1">Large ribosomal subunit protein eL31</fullName>
    </recommendedName>
    <alternativeName>
        <fullName>50S ribosomal protein L31e</fullName>
    </alternativeName>
</protein>
<gene>
    <name type="primary">rpl31e</name>
    <name type="ordered locus">PYRAB15200</name>
    <name type="ORF">PAB7387</name>
</gene>
<evidence type="ECO:0000305" key="1"/>
<organism>
    <name type="scientific">Pyrococcus abyssi (strain GE5 / Orsay)</name>
    <dbReference type="NCBI Taxonomy" id="272844"/>
    <lineage>
        <taxon>Archaea</taxon>
        <taxon>Methanobacteriati</taxon>
        <taxon>Methanobacteriota</taxon>
        <taxon>Thermococci</taxon>
        <taxon>Thermococcales</taxon>
        <taxon>Thermococcaceae</taxon>
        <taxon>Pyrococcus</taxon>
    </lineage>
</organism>
<name>RL31_PYRAB</name>
<sequence length="94" mass="11026">MPIKPGEEVIFTVPIRKIKKIVPRWKRAPRAVKFVREFVARHAKAQEVIISTKVNEKIWERGIEKPPSRLRVKVKVEEEDRDGKKVRIAYVDLA</sequence>
<dbReference type="EMBL" id="AJ248287">
    <property type="protein sequence ID" value="CAB50425.1"/>
    <property type="molecule type" value="Genomic_DNA"/>
</dbReference>
<dbReference type="EMBL" id="HE613800">
    <property type="protein sequence ID" value="CCE70974.1"/>
    <property type="molecule type" value="Genomic_DNA"/>
</dbReference>
<dbReference type="PIR" id="D75066">
    <property type="entry name" value="D75066"/>
</dbReference>
<dbReference type="RefSeq" id="WP_010868638.1">
    <property type="nucleotide sequence ID" value="NC_000868.1"/>
</dbReference>
<dbReference type="SMR" id="Q9UYI7"/>
<dbReference type="STRING" id="272844.PAB7387"/>
<dbReference type="KEGG" id="pab:PAB7387"/>
<dbReference type="PATRIC" id="fig|272844.11.peg.1619"/>
<dbReference type="eggNOG" id="arCOG04473">
    <property type="taxonomic scope" value="Archaea"/>
</dbReference>
<dbReference type="HOGENOM" id="CLU_112570_3_2_2"/>
<dbReference type="OrthoDB" id="10127at2157"/>
<dbReference type="PhylomeDB" id="Q9UYI7"/>
<dbReference type="Proteomes" id="UP000000810">
    <property type="component" value="Chromosome"/>
</dbReference>
<dbReference type="Proteomes" id="UP000009139">
    <property type="component" value="Chromosome"/>
</dbReference>
<dbReference type="GO" id="GO:0022625">
    <property type="term" value="C:cytosolic large ribosomal subunit"/>
    <property type="evidence" value="ECO:0007669"/>
    <property type="project" value="TreeGrafter"/>
</dbReference>
<dbReference type="GO" id="GO:0003735">
    <property type="term" value="F:structural constituent of ribosome"/>
    <property type="evidence" value="ECO:0007669"/>
    <property type="project" value="InterPro"/>
</dbReference>
<dbReference type="GO" id="GO:0002181">
    <property type="term" value="P:cytoplasmic translation"/>
    <property type="evidence" value="ECO:0007669"/>
    <property type="project" value="TreeGrafter"/>
</dbReference>
<dbReference type="CDD" id="cd00463">
    <property type="entry name" value="Ribosomal_L31e"/>
    <property type="match status" value="1"/>
</dbReference>
<dbReference type="FunFam" id="3.10.440.10:FF:000005">
    <property type="entry name" value="50S ribosomal protein L31e"/>
    <property type="match status" value="1"/>
</dbReference>
<dbReference type="Gene3D" id="3.10.440.10">
    <property type="match status" value="1"/>
</dbReference>
<dbReference type="HAMAP" id="MF_00410">
    <property type="entry name" value="Ribosomal_eL31"/>
    <property type="match status" value="1"/>
</dbReference>
<dbReference type="InterPro" id="IPR000054">
    <property type="entry name" value="Ribosomal_eL31"/>
</dbReference>
<dbReference type="InterPro" id="IPR020052">
    <property type="entry name" value="Ribosomal_eL31_CS"/>
</dbReference>
<dbReference type="InterPro" id="IPR023621">
    <property type="entry name" value="Ribosomal_eL31_dom_sf"/>
</dbReference>
<dbReference type="NCBIfam" id="NF002258">
    <property type="entry name" value="PRK01192.1-1"/>
    <property type="match status" value="1"/>
</dbReference>
<dbReference type="PANTHER" id="PTHR10956">
    <property type="entry name" value="60S RIBOSOMAL PROTEIN L31"/>
    <property type="match status" value="1"/>
</dbReference>
<dbReference type="PANTHER" id="PTHR10956:SF0">
    <property type="entry name" value="60S RIBOSOMAL PROTEIN L31"/>
    <property type="match status" value="1"/>
</dbReference>
<dbReference type="Pfam" id="PF01198">
    <property type="entry name" value="Ribosomal_L31e"/>
    <property type="match status" value="1"/>
</dbReference>
<dbReference type="SMART" id="SM01380">
    <property type="entry name" value="Ribosomal_L31e"/>
    <property type="match status" value="1"/>
</dbReference>
<dbReference type="SUPFAM" id="SSF54575">
    <property type="entry name" value="Ribosomal protein L31e"/>
    <property type="match status" value="1"/>
</dbReference>
<dbReference type="PROSITE" id="PS01144">
    <property type="entry name" value="RIBOSOMAL_L31E"/>
    <property type="match status" value="1"/>
</dbReference>
<keyword id="KW-0687">Ribonucleoprotein</keyword>
<keyword id="KW-0689">Ribosomal protein</keyword>
<feature type="chain" id="PRO_0000153800" description="Large ribosomal subunit protein eL31">
    <location>
        <begin position="1"/>
        <end position="94"/>
    </location>
</feature>
<proteinExistence type="inferred from homology"/>
<reference key="1">
    <citation type="journal article" date="2003" name="Mol. Microbiol.">
        <title>An integrated analysis of the genome of the hyperthermophilic archaeon Pyrococcus abyssi.</title>
        <authorList>
            <person name="Cohen G.N."/>
            <person name="Barbe V."/>
            <person name="Flament D."/>
            <person name="Galperin M."/>
            <person name="Heilig R."/>
            <person name="Lecompte O."/>
            <person name="Poch O."/>
            <person name="Prieur D."/>
            <person name="Querellou J."/>
            <person name="Ripp R."/>
            <person name="Thierry J.-C."/>
            <person name="Van der Oost J."/>
            <person name="Weissenbach J."/>
            <person name="Zivanovic Y."/>
            <person name="Forterre P."/>
        </authorList>
    </citation>
    <scope>NUCLEOTIDE SEQUENCE [LARGE SCALE GENOMIC DNA]</scope>
    <source>
        <strain>GE5 / Orsay</strain>
    </source>
</reference>
<reference key="2">
    <citation type="journal article" date="2012" name="Curr. Microbiol.">
        <title>Re-annotation of two hyperthermophilic archaea Pyrococcus abyssi GE5 and Pyrococcus furiosus DSM 3638.</title>
        <authorList>
            <person name="Gao J."/>
            <person name="Wang J."/>
        </authorList>
    </citation>
    <scope>GENOME REANNOTATION</scope>
    <source>
        <strain>GE5 / Orsay</strain>
    </source>
</reference>
<accession>Q9UYI7</accession>
<accession>G8ZIU1</accession>
<comment type="similarity">
    <text evidence="1">Belongs to the eukaryotic ribosomal protein eL31 family.</text>
</comment>